<protein>
    <recommendedName>
        <fullName>Protein BTN1</fullName>
    </recommendedName>
</protein>
<name>BTN1_CHAGB</name>
<gene>
    <name type="primary">BTN1</name>
    <name type="ORF">CHGG_10605</name>
</gene>
<comment type="function">
    <text evidence="1">Involved in vacuolar transport and vacuole pH homeostasis. Also required for cytokinesis (By similarity).</text>
</comment>
<comment type="subcellular location">
    <subcellularLocation>
        <location evidence="1">Vacuole membrane</location>
        <topology evidence="1">Multi-pass membrane protein</topology>
    </subcellularLocation>
</comment>
<comment type="similarity">
    <text evidence="3">Belongs to the battenin family.</text>
</comment>
<keyword id="KW-0029">Amino-acid transport</keyword>
<keyword id="KW-0472">Membrane</keyword>
<keyword id="KW-1185">Reference proteome</keyword>
<keyword id="KW-0812">Transmembrane</keyword>
<keyword id="KW-1133">Transmembrane helix</keyword>
<keyword id="KW-0813">Transport</keyword>
<keyword id="KW-0926">Vacuole</keyword>
<sequence>MNRSPSTSGLLPLPGTPSSSWALYRARLSNMFRNTDVSVVIAFWLFGLINNILYVLVLSAAQDLVGTSVPKGAVLLADVLPSFLTKLVAPYFIHRVPYSVRIAVFVALSCAGMLVVAAAPVEGAVGVKLLGVVLASLSSGGGELSFLGLTHYYGHGSLAAWGSGTGGAGLVGAGLYVVLTGWIGLGVRGSLLVGALLPSVMVVAFWGILPRGPLKGWKGGYERVAEPGEEEDGEEGFEDVPAGAASAGLLAPGPSVAATAYTHHHEGRTGRASFWGNVRRARALFFPYMLPLLLVYVAEYTINQGVAPTLLFPLDQSPFSEFREYYPFYGFLYQLGVFISRSSTPFIRIHHLYLPSFLQVANLVLLTLHAVLNFIPSVYLVFVVIFWEGLLGGAVYVNTFAEIMENVPAEDREFSLGATSVSDSGGICIAGFLGMAMEVWLCRWQVSQGRDYCRRIEAS</sequence>
<proteinExistence type="inferred from homology"/>
<evidence type="ECO:0000250" key="1"/>
<evidence type="ECO:0000255" key="2"/>
<evidence type="ECO:0000305" key="3"/>
<reference key="1">
    <citation type="journal article" date="2015" name="Genome Announc.">
        <title>Draft genome sequence of the cellulolytic fungus Chaetomium globosum.</title>
        <authorList>
            <person name="Cuomo C.A."/>
            <person name="Untereiner W.A."/>
            <person name="Ma L.-J."/>
            <person name="Grabherr M."/>
            <person name="Birren B.W."/>
        </authorList>
    </citation>
    <scope>NUCLEOTIDE SEQUENCE [LARGE SCALE GENOMIC DNA]</scope>
    <source>
        <strain>ATCC 6205 / CBS 148.51 / DSM 1962 / NBRC 6347 / NRRL 1970</strain>
    </source>
</reference>
<feature type="chain" id="PRO_0000256259" description="Protein BTN1">
    <location>
        <begin position="1"/>
        <end position="459"/>
    </location>
</feature>
<feature type="transmembrane region" description="Helical" evidence="2">
    <location>
        <begin position="37"/>
        <end position="57"/>
    </location>
</feature>
<feature type="transmembrane region" description="Helical" evidence="2">
    <location>
        <begin position="73"/>
        <end position="93"/>
    </location>
</feature>
<feature type="transmembrane region" description="Helical" evidence="2">
    <location>
        <begin position="102"/>
        <end position="122"/>
    </location>
</feature>
<feature type="transmembrane region" description="Helical" evidence="2">
    <location>
        <begin position="129"/>
        <end position="149"/>
    </location>
</feature>
<feature type="transmembrane region" description="Helical" evidence="2">
    <location>
        <begin position="167"/>
        <end position="187"/>
    </location>
</feature>
<feature type="transmembrane region" description="Helical" evidence="2">
    <location>
        <begin position="189"/>
        <end position="209"/>
    </location>
</feature>
<feature type="transmembrane region" description="Helical" evidence="2">
    <location>
        <begin position="240"/>
        <end position="260"/>
    </location>
</feature>
<feature type="transmembrane region" description="Helical" evidence="2">
    <location>
        <begin position="283"/>
        <end position="303"/>
    </location>
</feature>
<feature type="transmembrane region" description="Helical" evidence="2">
    <location>
        <begin position="325"/>
        <end position="342"/>
    </location>
</feature>
<feature type="transmembrane region" description="Helical" evidence="2">
    <location>
        <begin position="352"/>
        <end position="372"/>
    </location>
</feature>
<feature type="transmembrane region" description="Helical" evidence="2">
    <location>
        <begin position="374"/>
        <end position="394"/>
    </location>
</feature>
<organism>
    <name type="scientific">Chaetomium globosum (strain ATCC 6205 / CBS 148.51 / DSM 1962 / NBRC 6347 / NRRL 1970)</name>
    <name type="common">Soil fungus</name>
    <dbReference type="NCBI Taxonomy" id="306901"/>
    <lineage>
        <taxon>Eukaryota</taxon>
        <taxon>Fungi</taxon>
        <taxon>Dikarya</taxon>
        <taxon>Ascomycota</taxon>
        <taxon>Pezizomycotina</taxon>
        <taxon>Sordariomycetes</taxon>
        <taxon>Sordariomycetidae</taxon>
        <taxon>Sordariales</taxon>
        <taxon>Chaetomiaceae</taxon>
        <taxon>Chaetomium</taxon>
    </lineage>
</organism>
<dbReference type="EMBL" id="CH408035">
    <property type="protein sequence ID" value="EAQ84201.1"/>
    <property type="molecule type" value="Genomic_DNA"/>
</dbReference>
<dbReference type="RefSeq" id="XP_001228532.1">
    <property type="nucleotide sequence ID" value="XM_001228531.1"/>
</dbReference>
<dbReference type="SMR" id="Q2GN49"/>
<dbReference type="FunCoup" id="Q2GN49">
    <property type="interactions" value="98"/>
</dbReference>
<dbReference type="STRING" id="306901.Q2GN49"/>
<dbReference type="GeneID" id="4396522"/>
<dbReference type="VEuPathDB" id="FungiDB:CHGG_10605"/>
<dbReference type="eggNOG" id="KOG3880">
    <property type="taxonomic scope" value="Eukaryota"/>
</dbReference>
<dbReference type="HOGENOM" id="CLU_029663_1_2_1"/>
<dbReference type="InParanoid" id="Q2GN49"/>
<dbReference type="OMA" id="WLCNWQV"/>
<dbReference type="OrthoDB" id="5965864at2759"/>
<dbReference type="Proteomes" id="UP000001056">
    <property type="component" value="Unassembled WGS sequence"/>
</dbReference>
<dbReference type="GO" id="GO:0000324">
    <property type="term" value="C:fungal-type vacuole"/>
    <property type="evidence" value="ECO:0007669"/>
    <property type="project" value="EnsemblFungi"/>
</dbReference>
<dbReference type="GO" id="GO:0005774">
    <property type="term" value="C:vacuolar membrane"/>
    <property type="evidence" value="ECO:0007669"/>
    <property type="project" value="UniProtKB-SubCell"/>
</dbReference>
<dbReference type="GO" id="GO:1903826">
    <property type="term" value="P:L-arginine transmembrane transport"/>
    <property type="evidence" value="ECO:0007669"/>
    <property type="project" value="EnsemblFungi"/>
</dbReference>
<dbReference type="GO" id="GO:0015819">
    <property type="term" value="P:lysine transport"/>
    <property type="evidence" value="ECO:0007669"/>
    <property type="project" value="EnsemblFungi"/>
</dbReference>
<dbReference type="GO" id="GO:0051453">
    <property type="term" value="P:regulation of intracellular pH"/>
    <property type="evidence" value="ECO:0007669"/>
    <property type="project" value="EnsemblFungi"/>
</dbReference>
<dbReference type="Gene3D" id="1.20.1250.20">
    <property type="entry name" value="MFS general substrate transporter like domains"/>
    <property type="match status" value="1"/>
</dbReference>
<dbReference type="InterPro" id="IPR003492">
    <property type="entry name" value="Battenin_disease_Cln3"/>
</dbReference>
<dbReference type="InterPro" id="IPR018460">
    <property type="entry name" value="Battenin_disease_Cln3_subgr"/>
</dbReference>
<dbReference type="InterPro" id="IPR036259">
    <property type="entry name" value="MFS_trans_sf"/>
</dbReference>
<dbReference type="PANTHER" id="PTHR10981">
    <property type="entry name" value="BATTENIN"/>
    <property type="match status" value="1"/>
</dbReference>
<dbReference type="PANTHER" id="PTHR10981:SF0">
    <property type="entry name" value="BATTENIN"/>
    <property type="match status" value="1"/>
</dbReference>
<dbReference type="Pfam" id="PF02487">
    <property type="entry name" value="CLN3"/>
    <property type="match status" value="1"/>
</dbReference>
<dbReference type="PIRSF" id="PIRSF015974">
    <property type="entry name" value="CLN3_BTN1"/>
    <property type="match status" value="1"/>
</dbReference>
<dbReference type="PRINTS" id="PR01315">
    <property type="entry name" value="BATTENIN"/>
</dbReference>
<dbReference type="SUPFAM" id="SSF103473">
    <property type="entry name" value="MFS general substrate transporter"/>
    <property type="match status" value="1"/>
</dbReference>
<accession>Q2GN49</accession>